<organism>
    <name type="scientific">Pseudomonas putida</name>
    <name type="common">Arthrobacter siderocapsulatus</name>
    <dbReference type="NCBI Taxonomy" id="303"/>
    <lineage>
        <taxon>Bacteria</taxon>
        <taxon>Pseudomonadati</taxon>
        <taxon>Pseudomonadota</taxon>
        <taxon>Gammaproteobacteria</taxon>
        <taxon>Pseudomonadales</taxon>
        <taxon>Pseudomonadaceae</taxon>
        <taxon>Pseudomonas</taxon>
    </lineage>
</organism>
<evidence type="ECO:0000255" key="1">
    <source>
        <dbReference type="PROSITE-ProRule" id="PRU00628"/>
    </source>
</evidence>
<evidence type="ECO:0000269" key="2">
    <source>
    </source>
</evidence>
<evidence type="ECO:0000269" key="3">
    <source>
    </source>
</evidence>
<evidence type="ECO:0000269" key="4">
    <source>
    </source>
</evidence>
<evidence type="ECO:0000269" key="5">
    <source>
    </source>
</evidence>
<evidence type="ECO:0000269" key="6">
    <source>
    </source>
</evidence>
<evidence type="ECO:0000303" key="7">
    <source>
    </source>
</evidence>
<evidence type="ECO:0000303" key="8">
    <source>
    </source>
</evidence>
<evidence type="ECO:0000303" key="9">
    <source>
    </source>
</evidence>
<evidence type="ECO:0000305" key="10"/>
<evidence type="ECO:0000305" key="11">
    <source>
    </source>
</evidence>
<evidence type="ECO:0000305" key="12">
    <source>
    </source>
</evidence>
<evidence type="ECO:0000305" key="13">
    <source>
    </source>
</evidence>
<evidence type="ECO:0007744" key="14">
    <source>
        <dbReference type="PDB" id="2QPZ"/>
    </source>
</evidence>
<evidence type="ECO:0007829" key="15">
    <source>
        <dbReference type="PDB" id="2QPZ"/>
    </source>
</evidence>
<reference key="1">
    <citation type="journal article" date="1988" name="Gene">
        <title>Cloning, nucleotide sequence and characterization of genes encoding naphthalene dioxygenase of Pseudomonas putida strain NCIB9816.</title>
        <authorList>
            <person name="Kurkela S."/>
            <person name="Lehvaeslaiho H."/>
            <person name="Palva E.T."/>
            <person name="Teeri T.H."/>
        </authorList>
    </citation>
    <scope>NUCLEOTIDE SEQUENCE [GENOMIC DNA]</scope>
    <source>
        <strain>DSM 8368 / NCIMB 9816 / PG</strain>
    </source>
</reference>
<reference key="2">
    <citation type="journal article" date="1993" name="Gene">
        <title>Sequences of genes encoding naphthalene dioxygenase in Pseudomonas putida strains G7 and NCIB 9816-4.</title>
        <authorList>
            <person name="Simon M.J."/>
            <person name="Osslund T.D."/>
            <person name="Saunders R."/>
            <person name="Ensley B.D."/>
            <person name="Suggs S."/>
            <person name="Harcourt A.A."/>
            <person name="Suen W.-C."/>
            <person name="Cruden D.L."/>
            <person name="Gibson D.T."/>
            <person name="Zylstra G.J."/>
        </authorList>
    </citation>
    <scope>NUCLEOTIDE SEQUENCE [GENOMIC DNA]</scope>
    <scope>PROTEIN SEQUENCE OF 2-9</scope>
    <source>
        <strain>ATCC 17485 / DSM 50208 / JCM 6158 / NCIMB 12092 / Stanier 111 / Biotype A</strain>
        <strain>NCIMB 9816-4</strain>
        <plasmid>NAH7</plasmid>
        <plasmid>pDTG1</plasmid>
    </source>
</reference>
<reference key="3">
    <citation type="submission" date="1997-06" db="EMBL/GenBank/DDBJ databases">
        <title>Naphthalene dioxygenase genes from Pseudomonas putida.</title>
        <authorList>
            <person name="Hamann C."/>
        </authorList>
    </citation>
    <scope>NUCLEOTIDE SEQUENCE [GENOMIC DNA]</scope>
    <source>
        <strain>ATCC 17484 / DSM 50222 / NCIMB 10535 / Stanier 110 / Biotype B</strain>
    </source>
</reference>
<reference key="4">
    <citation type="journal article" date="1983" name="J. Bacteriol.">
        <title>Naphthalene dioxygenase: purification and properties of a terminal oxygenase component.</title>
        <authorList>
            <person name="Ensley B.D."/>
            <person name="Gibson D.T."/>
        </authorList>
    </citation>
    <scope>FUNCTION</scope>
    <scope>SUBUNIT</scope>
    <source>
        <strain>DSM 8368 / NCIMB 9816 / PG</strain>
    </source>
</reference>
<reference key="5">
    <citation type="journal article" date="1990" name="J. Bacteriol.">
        <title>Purification and properties of ferredoxin NAP, a component of naphthalene dioxygenase from Pseudomonas sp. strain NCIB 9816.</title>
        <authorList>
            <person name="Haigler B.E."/>
            <person name="Gibson D.T."/>
        </authorList>
    </citation>
    <scope>FUNCTION</scope>
    <scope>COFACTOR</scope>
    <scope>SUBUNIT</scope>
</reference>
<reference key="6">
    <citation type="journal article" date="2000" name="J. Bacteriol.">
        <title>Substrate specificity of naphthalene dioxygenase: effect of specific amino acids at the active site of the enzyme.</title>
        <authorList>
            <person name="Parales R.E."/>
            <person name="Lee K."/>
            <person name="Resnick S.M."/>
            <person name="Jiang H."/>
            <person name="Lessner D.J."/>
            <person name="Gibson D.T."/>
        </authorList>
    </citation>
    <scope>FUNCTION</scope>
    <scope>SUBSTRATE SPECIFICITY</scope>
    <scope>PATHWAY</scope>
    <source>
        <strain>NCIMB 9816-4</strain>
    </source>
</reference>
<reference key="7">
    <citation type="journal article" date="2008" name="J. Biol. Inorg. Chem.">
        <title>Determining Rieske cluster reduction potentials.</title>
        <authorList>
            <person name="Brown E.N."/>
            <person name="Friemann R."/>
            <person name="Karlsson A."/>
            <person name="Parales J.V."/>
            <person name="Couture M.M."/>
            <person name="Eltis L.D."/>
            <person name="Ramaswamy S."/>
        </authorList>
    </citation>
    <scope>X-RAY CRYSTALLOGRAPHY (1.85 ANGSTROMS) OF 2-104 IN COMPLEX WITH [2FE-2S] CLUSTER</scope>
    <scope>COFACTOR</scope>
</reference>
<sequence>MTVKWIEAVALSDILEGDVLGVTVEGKELALYEVEGEIYATDNLCTHGSARMSDGYLEGREIECPLHQGRFDVCTGKALCAPVTQNIKTYPVKIENLRVMIDLS</sequence>
<dbReference type="EMBL" id="M23914">
    <property type="protein sequence ID" value="AAB47590.1"/>
    <property type="molecule type" value="Genomic_DNA"/>
</dbReference>
<dbReference type="EMBL" id="AF491307">
    <property type="protein sequence ID" value="AAA25905.1"/>
    <property type="molecule type" value="Genomic_DNA"/>
</dbReference>
<dbReference type="EMBL" id="M83949">
    <property type="protein sequence ID" value="AAA25901.1"/>
    <property type="molecule type" value="Genomic_DNA"/>
</dbReference>
<dbReference type="EMBL" id="AF004284">
    <property type="protein sequence ID" value="AAB61372.1"/>
    <property type="molecule type" value="Genomic_DNA"/>
</dbReference>
<dbReference type="PIR" id="JN0641">
    <property type="entry name" value="JN0641"/>
</dbReference>
<dbReference type="PIR" id="JN0643">
    <property type="entry name" value="JN0643"/>
</dbReference>
<dbReference type="RefSeq" id="NP_863071.1">
    <property type="nucleotide sequence ID" value="NC_004999.1"/>
</dbReference>
<dbReference type="RefSeq" id="WP_011117470.1">
    <property type="nucleotide sequence ID" value="NZ_CP059053.1"/>
</dbReference>
<dbReference type="RefSeq" id="YP_534821.1">
    <property type="nucleotide sequence ID" value="NC_007926.1"/>
</dbReference>
<dbReference type="PDB" id="2QPZ">
    <property type="method" value="X-ray"/>
    <property type="resolution" value="1.85 A"/>
    <property type="chains" value="A=2-104"/>
</dbReference>
<dbReference type="PDBsum" id="2QPZ"/>
<dbReference type="SMR" id="P0A185"/>
<dbReference type="KEGG" id="ag:AAA25905"/>
<dbReference type="BioCyc" id="MetaCyc:MONOMER-12801"/>
<dbReference type="UniPathway" id="UPA00082"/>
<dbReference type="EvolutionaryTrace" id="P0A185"/>
<dbReference type="GO" id="GO:0051537">
    <property type="term" value="F:2 iron, 2 sulfur cluster binding"/>
    <property type="evidence" value="ECO:0000314"/>
    <property type="project" value="UniProtKB"/>
</dbReference>
<dbReference type="GO" id="GO:0046872">
    <property type="term" value="F:metal ion binding"/>
    <property type="evidence" value="ECO:0007669"/>
    <property type="project" value="UniProtKB-KW"/>
</dbReference>
<dbReference type="GO" id="GO:0009056">
    <property type="term" value="P:catabolic process"/>
    <property type="evidence" value="ECO:0007669"/>
    <property type="project" value="UniProtKB-KW"/>
</dbReference>
<dbReference type="CDD" id="cd03528">
    <property type="entry name" value="Rieske_RO_ferredoxin"/>
    <property type="match status" value="1"/>
</dbReference>
<dbReference type="FunFam" id="2.102.10.10:FF:000015">
    <property type="entry name" value="Naphthalene 1,2-dioxygenase ferredoxin component"/>
    <property type="match status" value="1"/>
</dbReference>
<dbReference type="Gene3D" id="2.102.10.10">
    <property type="entry name" value="Rieske [2Fe-2S] iron-sulphur domain"/>
    <property type="match status" value="1"/>
</dbReference>
<dbReference type="InterPro" id="IPR017941">
    <property type="entry name" value="Rieske_2Fe-2S"/>
</dbReference>
<dbReference type="InterPro" id="IPR036922">
    <property type="entry name" value="Rieske_2Fe-2S_sf"/>
</dbReference>
<dbReference type="PANTHER" id="PTHR21496:SF23">
    <property type="entry name" value="3-PHENYLPROPIONATE_CINNAMIC ACID DIOXYGENASE FERREDOXIN SUBUNIT"/>
    <property type="match status" value="1"/>
</dbReference>
<dbReference type="PANTHER" id="PTHR21496">
    <property type="entry name" value="FERREDOXIN-RELATED"/>
    <property type="match status" value="1"/>
</dbReference>
<dbReference type="Pfam" id="PF00355">
    <property type="entry name" value="Rieske"/>
    <property type="match status" value="1"/>
</dbReference>
<dbReference type="SUPFAM" id="SSF50022">
    <property type="entry name" value="ISP domain"/>
    <property type="match status" value="1"/>
</dbReference>
<dbReference type="PROSITE" id="PS51296">
    <property type="entry name" value="RIESKE"/>
    <property type="match status" value="1"/>
</dbReference>
<protein>
    <recommendedName>
        <fullName evidence="7">Naphthalene 1,2-dioxygenase system, ferredoxin component</fullName>
    </recommendedName>
</protein>
<name>NDOA_PSEPU</name>
<feature type="initiator methionine" description="Removed" evidence="6">
    <location>
        <position position="1"/>
    </location>
</feature>
<feature type="chain" id="PRO_0000201693" description="Naphthalene 1,2-dioxygenase system, ferredoxin component">
    <location>
        <begin position="2"/>
        <end position="104"/>
    </location>
</feature>
<feature type="domain" description="Rieske" evidence="1">
    <location>
        <begin position="6"/>
        <end position="101"/>
    </location>
</feature>
<feature type="binding site" evidence="3 14">
    <location>
        <position position="45"/>
    </location>
    <ligand>
        <name>[2Fe-2S] cluster</name>
        <dbReference type="ChEBI" id="CHEBI:190135"/>
    </ligand>
</feature>
<feature type="binding site" evidence="3 14">
    <location>
        <position position="47"/>
    </location>
    <ligand>
        <name>[2Fe-2S] cluster</name>
        <dbReference type="ChEBI" id="CHEBI:190135"/>
    </ligand>
</feature>
<feature type="binding site" evidence="3 14">
    <location>
        <position position="64"/>
    </location>
    <ligand>
        <name>[2Fe-2S] cluster</name>
        <dbReference type="ChEBI" id="CHEBI:190135"/>
    </ligand>
</feature>
<feature type="binding site" evidence="3 14">
    <location>
        <position position="67"/>
    </location>
    <ligand>
        <name>[2Fe-2S] cluster</name>
        <dbReference type="ChEBI" id="CHEBI:190135"/>
    </ligand>
</feature>
<feature type="sequence variant" description="In strain: G7.">
    <original>V</original>
    <variation>E</variation>
    <location>
        <position position="3"/>
    </location>
</feature>
<feature type="sequence variant" description="In strain: G7.">
    <original>L</original>
    <variation>P</variation>
    <location>
        <position position="15"/>
    </location>
</feature>
<feature type="sequence variant" description="In strain: G7.">
    <original>S</original>
    <variation>A</variation>
    <location>
        <position position="49"/>
    </location>
</feature>
<feature type="sequence variant" description="In strain: G7.">
    <original>K</original>
    <variation>R</variation>
    <location>
        <position position="77"/>
    </location>
</feature>
<feature type="sequence variant" description="In strain: G7.">
    <original>Q</original>
    <variation>E</variation>
    <location>
        <position position="85"/>
    </location>
</feature>
<feature type="sequence variant" description="In strain: G7.">
    <original>P</original>
    <variation>A</variation>
    <location>
        <position position="91"/>
    </location>
</feature>
<feature type="sequence variant" description="In strain: G7.">
    <original>S</original>
    <variation>GEF</variation>
    <location>
        <position position="104"/>
    </location>
</feature>
<feature type="strand" evidence="15">
    <location>
        <begin position="5"/>
        <end position="10"/>
    </location>
</feature>
<feature type="strand" evidence="15">
    <location>
        <begin position="19"/>
        <end position="24"/>
    </location>
</feature>
<feature type="strand" evidence="15">
    <location>
        <begin position="27"/>
        <end position="34"/>
    </location>
</feature>
<feature type="strand" evidence="15">
    <location>
        <begin position="37"/>
        <end position="44"/>
    </location>
</feature>
<feature type="strand" evidence="15">
    <location>
        <begin position="46"/>
        <end position="49"/>
    </location>
</feature>
<feature type="helix" evidence="15">
    <location>
        <begin position="52"/>
        <end position="54"/>
    </location>
</feature>
<feature type="strand" evidence="15">
    <location>
        <begin position="55"/>
        <end position="58"/>
    </location>
</feature>
<feature type="strand" evidence="15">
    <location>
        <begin position="61"/>
        <end position="63"/>
    </location>
</feature>
<feature type="turn" evidence="15">
    <location>
        <begin position="65"/>
        <end position="68"/>
    </location>
</feature>
<feature type="strand" evidence="15">
    <location>
        <begin position="70"/>
        <end position="72"/>
    </location>
</feature>
<feature type="turn" evidence="15">
    <location>
        <begin position="73"/>
        <end position="75"/>
    </location>
</feature>
<feature type="strand" evidence="15">
    <location>
        <begin position="78"/>
        <end position="80"/>
    </location>
</feature>
<feature type="strand" evidence="15">
    <location>
        <begin position="92"/>
        <end position="95"/>
    </location>
</feature>
<feature type="strand" evidence="15">
    <location>
        <begin position="98"/>
        <end position="102"/>
    </location>
</feature>
<comment type="function">
    <text evidence="2 4 5">Component of the naphthalene dioxygenase (NDO) multicomponent enzyme system which catalyzes the incorporation of both atoms of molecular oxygen into naphthalene to form cis-(1R,2S)-dihydroxy-1,2-dihydronaphthalene (PubMed:10692370, PubMed:2294093, PubMed:6874638). Functions as an intermediate electron transfer protein via a specific interaction with iron sulfur protein components (ISP) (NdoB and NdoC) (PubMed:2294093). Also able to catalyze the cis-dihydroxylation of biphenyl and phenanthrene (PubMed:10692370).</text>
</comment>
<comment type="cofactor">
    <cofactor evidence="3 4">
        <name>[2Fe-2S] cluster</name>
        <dbReference type="ChEBI" id="CHEBI:190135"/>
    </cofactor>
    <text evidence="4">Binds 1 [2Fe-2S] cluster.</text>
</comment>
<comment type="pathway">
    <text evidence="11">Aromatic compound metabolism; naphthalene degradation.</text>
</comment>
<comment type="subunit">
    <text evidence="12 13">The naphthalene dioxygenase (NDO) multicomponent enzyme system is composed of an electron transfer component and a dioxygenase component (iron sulfur protein (ISP)). The electron transfer component is composed of a ferredoxin reductase (NdoR) and a ferredoxin (NdoA), and the dioxygenase component is formed of a heterohexamer (trimer of heterodimers) of three large alpha subunits (NdoB) and three small beta subunits (NdoC).</text>
</comment>
<comment type="similarity">
    <text evidence="10">Belongs to the bacterial ring-hydroxylating dioxygenase ferredoxin component family.</text>
</comment>
<geneLocation type="plasmid">
    <name>pDTG1</name>
</geneLocation>
<geneLocation type="plasmid">
    <name>NAH7</name>
</geneLocation>
<accession>P0A185</accession>
<accession>O07829</accession>
<accession>P23082</accession>
<accession>Q52123</accession>
<proteinExistence type="evidence at protein level"/>
<keyword id="KW-0001">2Fe-2S</keyword>
<keyword id="KW-0002">3D-structure</keyword>
<keyword id="KW-0058">Aromatic hydrocarbons catabolism</keyword>
<keyword id="KW-0903">Direct protein sequencing</keyword>
<keyword id="KW-0249">Electron transport</keyword>
<keyword id="KW-0408">Iron</keyword>
<keyword id="KW-0411">Iron-sulfur</keyword>
<keyword id="KW-0479">Metal-binding</keyword>
<keyword id="KW-0614">Plasmid</keyword>
<keyword id="KW-0813">Transport</keyword>
<gene>
    <name evidence="8" type="primary">ndoA</name>
    <name evidence="9" type="synonym">nahAB</name>
    <name type="synonym">ndoC1</name>
</gene>